<sequence>MSSNVPADMINLRLILVSGKTKEFLFSPNDSASDIAKHVYDNWPMDWEEEQVSSPNILRLIYQGRFLHGNVTLGALKLPFGKTTVMHLVARETLPEPNSQGQRNREKTGESNCCVIL</sequence>
<dbReference type="EMBL" id="AF044221">
    <property type="protein sequence ID" value="AAD02323.1"/>
    <property type="molecule type" value="mRNA"/>
</dbReference>
<dbReference type="EMBL" id="AL080177">
    <property type="protein sequence ID" value="CAB45762.1"/>
    <property type="molecule type" value="mRNA"/>
</dbReference>
<dbReference type="EMBL" id="AK311846">
    <property type="protein sequence ID" value="BAG34788.1"/>
    <property type="molecule type" value="mRNA"/>
</dbReference>
<dbReference type="EMBL" id="AK056580">
    <property type="protein sequence ID" value="BAG51754.1"/>
    <property type="molecule type" value="mRNA"/>
</dbReference>
<dbReference type="EMBL" id="CR533458">
    <property type="protein sequence ID" value="CAG38489.1"/>
    <property type="molecule type" value="mRNA"/>
</dbReference>
<dbReference type="EMBL" id="AL158193">
    <property type="status" value="NOT_ANNOTATED_CDS"/>
    <property type="molecule type" value="Genomic_DNA"/>
</dbReference>
<dbReference type="EMBL" id="AL139188">
    <property type="status" value="NOT_ANNOTATED_CDS"/>
    <property type="molecule type" value="Genomic_DNA"/>
</dbReference>
<dbReference type="EMBL" id="CH471075">
    <property type="protein sequence ID" value="EAX08446.1"/>
    <property type="molecule type" value="Genomic_DNA"/>
</dbReference>
<dbReference type="EMBL" id="BC044582">
    <property type="protein sequence ID" value="AAH44582.1"/>
    <property type="molecule type" value="mRNA"/>
</dbReference>
<dbReference type="EMBL" id="BC059385">
    <property type="protein sequence ID" value="AAH59385.1"/>
    <property type="molecule type" value="mRNA"/>
</dbReference>
<dbReference type="CCDS" id="CCDS9334.1"/>
<dbReference type="PIR" id="T12498">
    <property type="entry name" value="T12498"/>
</dbReference>
<dbReference type="RefSeq" id="NP_009037.1">
    <property type="nucleotide sequence ID" value="NM_007106.4"/>
</dbReference>
<dbReference type="PDB" id="2GOW">
    <property type="method" value="NMR"/>
    <property type="chains" value="A=2-117"/>
</dbReference>
<dbReference type="PDBsum" id="2GOW"/>
<dbReference type="BMRB" id="O95164"/>
<dbReference type="SMR" id="O95164"/>
<dbReference type="BioGRID" id="111413">
    <property type="interactions" value="34"/>
</dbReference>
<dbReference type="CORUM" id="O95164"/>
<dbReference type="FunCoup" id="O95164">
    <property type="interactions" value="167"/>
</dbReference>
<dbReference type="IntAct" id="O95164">
    <property type="interactions" value="16"/>
</dbReference>
<dbReference type="STRING" id="9606.ENSP00000370055"/>
<dbReference type="iPTMnet" id="O95164"/>
<dbReference type="PhosphoSitePlus" id="O95164"/>
<dbReference type="SwissPalm" id="O95164"/>
<dbReference type="BioMuta" id="UBL3"/>
<dbReference type="jPOST" id="O95164"/>
<dbReference type="MassIVE" id="O95164"/>
<dbReference type="PaxDb" id="9606-ENSP00000370055"/>
<dbReference type="PeptideAtlas" id="O95164"/>
<dbReference type="ProteomicsDB" id="50678"/>
<dbReference type="Pumba" id="O95164"/>
<dbReference type="Antibodypedia" id="22737">
    <property type="antibodies" value="161 antibodies from 25 providers"/>
</dbReference>
<dbReference type="DNASU" id="5412"/>
<dbReference type="Ensembl" id="ENST00000380680.5">
    <property type="protein sequence ID" value="ENSP00000370055.4"/>
    <property type="gene ID" value="ENSG00000122042.10"/>
</dbReference>
<dbReference type="GeneID" id="5412"/>
<dbReference type="KEGG" id="hsa:5412"/>
<dbReference type="MANE-Select" id="ENST00000380680.5">
    <property type="protein sequence ID" value="ENSP00000370055.4"/>
    <property type="RefSeq nucleotide sequence ID" value="NM_007106.4"/>
    <property type="RefSeq protein sequence ID" value="NP_009037.1"/>
</dbReference>
<dbReference type="UCSC" id="uc001usp.4">
    <property type="organism name" value="human"/>
</dbReference>
<dbReference type="AGR" id="HGNC:12504"/>
<dbReference type="CTD" id="5412"/>
<dbReference type="DisGeNET" id="5412"/>
<dbReference type="GeneCards" id="UBL3"/>
<dbReference type="HGNC" id="HGNC:12504">
    <property type="gene designation" value="UBL3"/>
</dbReference>
<dbReference type="HPA" id="ENSG00000122042">
    <property type="expression patterns" value="Low tissue specificity"/>
</dbReference>
<dbReference type="MIM" id="604711">
    <property type="type" value="gene"/>
</dbReference>
<dbReference type="neXtProt" id="NX_O95164"/>
<dbReference type="OpenTargets" id="ENSG00000122042"/>
<dbReference type="PharmGKB" id="PA37151"/>
<dbReference type="VEuPathDB" id="HostDB:ENSG00000122042"/>
<dbReference type="eggNOG" id="ENOG502RYGN">
    <property type="taxonomic scope" value="Eukaryota"/>
</dbReference>
<dbReference type="GeneTree" id="ENSGT00390000004952"/>
<dbReference type="HOGENOM" id="CLU_151471_0_0_1"/>
<dbReference type="InParanoid" id="O95164"/>
<dbReference type="OMA" id="WPDEWYE"/>
<dbReference type="OrthoDB" id="1043111at2759"/>
<dbReference type="PAN-GO" id="O95164">
    <property type="GO annotations" value="0 GO annotations based on evolutionary models"/>
</dbReference>
<dbReference type="PhylomeDB" id="O95164"/>
<dbReference type="TreeFam" id="TF314489"/>
<dbReference type="PathwayCommons" id="O95164"/>
<dbReference type="SignaLink" id="O95164"/>
<dbReference type="BioGRID-ORCS" id="5412">
    <property type="hits" value="11 hits in 1141 CRISPR screens"/>
</dbReference>
<dbReference type="ChiTaRS" id="UBL3">
    <property type="organism name" value="human"/>
</dbReference>
<dbReference type="EvolutionaryTrace" id="O95164"/>
<dbReference type="GeneWiki" id="UBL3"/>
<dbReference type="GenomeRNAi" id="5412"/>
<dbReference type="Pharos" id="O95164">
    <property type="development level" value="Tbio"/>
</dbReference>
<dbReference type="PRO" id="PR:O95164"/>
<dbReference type="Proteomes" id="UP000005640">
    <property type="component" value="Chromosome 13"/>
</dbReference>
<dbReference type="RNAct" id="O95164">
    <property type="molecule type" value="protein"/>
</dbReference>
<dbReference type="Bgee" id="ENSG00000122042">
    <property type="expression patterns" value="Expressed in inferior olivary complex and 210 other cell types or tissues"/>
</dbReference>
<dbReference type="ExpressionAtlas" id="O95164">
    <property type="expression patterns" value="baseline and differential"/>
</dbReference>
<dbReference type="GO" id="GO:0070062">
    <property type="term" value="C:extracellular exosome"/>
    <property type="evidence" value="ECO:0007005"/>
    <property type="project" value="UniProtKB"/>
</dbReference>
<dbReference type="GO" id="GO:0005886">
    <property type="term" value="C:plasma membrane"/>
    <property type="evidence" value="ECO:0007669"/>
    <property type="project" value="UniProtKB-SubCell"/>
</dbReference>
<dbReference type="CDD" id="cd17048">
    <property type="entry name" value="Ubl_UBL3"/>
    <property type="match status" value="1"/>
</dbReference>
<dbReference type="FunFam" id="3.10.20.90:FF:000167">
    <property type="entry name" value="Ubiquitin-like 3a"/>
    <property type="match status" value="1"/>
</dbReference>
<dbReference type="Gene3D" id="3.10.20.90">
    <property type="entry name" value="Phosphatidylinositol 3-kinase Catalytic Subunit, Chain A, domain 1"/>
    <property type="match status" value="1"/>
</dbReference>
<dbReference type="InterPro" id="IPR017000">
    <property type="entry name" value="MUB"/>
</dbReference>
<dbReference type="InterPro" id="IPR000626">
    <property type="entry name" value="Ubiquitin-like_dom"/>
</dbReference>
<dbReference type="InterPro" id="IPR029071">
    <property type="entry name" value="Ubiquitin-like_domsf"/>
</dbReference>
<dbReference type="InterPro" id="IPR040015">
    <property type="entry name" value="UBL3-like"/>
</dbReference>
<dbReference type="InterPro" id="IPR039540">
    <property type="entry name" value="UBL3-like_ubiquitin_dom"/>
</dbReference>
<dbReference type="InterPro" id="IPR047977">
    <property type="entry name" value="UBL3_Ubl_met"/>
</dbReference>
<dbReference type="PANTHER" id="PTHR13169:SF0">
    <property type="entry name" value="UBIQUITIN-LIKE PROTEIN 3"/>
    <property type="match status" value="1"/>
</dbReference>
<dbReference type="PANTHER" id="PTHR13169">
    <property type="entry name" value="UBIQUITIN-LIKE PROTEIN 3 HCG-1 PROTEIN"/>
    <property type="match status" value="1"/>
</dbReference>
<dbReference type="Pfam" id="PF13881">
    <property type="entry name" value="Rad60-SLD_2"/>
    <property type="match status" value="1"/>
</dbReference>
<dbReference type="PIRSF" id="PIRSF032572">
    <property type="entry name" value="MUB"/>
    <property type="match status" value="1"/>
</dbReference>
<dbReference type="SUPFAM" id="SSF54236">
    <property type="entry name" value="Ubiquitin-like"/>
    <property type="match status" value="1"/>
</dbReference>
<dbReference type="PROSITE" id="PS50053">
    <property type="entry name" value="UBIQUITIN_2"/>
    <property type="match status" value="1"/>
</dbReference>
<evidence type="ECO:0000250" key="1"/>
<evidence type="ECO:0000255" key="2">
    <source>
        <dbReference type="PROSITE-ProRule" id="PRU00214"/>
    </source>
</evidence>
<evidence type="ECO:0000269" key="3">
    <source>
    </source>
</evidence>
<evidence type="ECO:0000305" key="4"/>
<evidence type="ECO:0000305" key="5">
    <source>
    </source>
</evidence>
<evidence type="ECO:0007829" key="6">
    <source>
        <dbReference type="PDB" id="2GOW"/>
    </source>
</evidence>
<feature type="chain" id="PRO_0000114862" description="Ubiquitin-like protein 3">
    <location>
        <begin position="1"/>
        <end position="114"/>
    </location>
</feature>
<feature type="propeptide" id="PRO_0000248183" description="Removed in mature form" evidence="4">
    <location>
        <begin position="115"/>
        <end position="117"/>
    </location>
</feature>
<feature type="domain" description="Ubiquitin-like" evidence="2">
    <location>
        <begin position="10"/>
        <end position="88"/>
    </location>
</feature>
<feature type="modified residue" description="Cysteine methyl ester" evidence="4">
    <location>
        <position position="114"/>
    </location>
</feature>
<feature type="lipid moiety-binding region" description="S-palmitoyl cysteine" evidence="5">
    <location>
        <position position="113"/>
    </location>
</feature>
<feature type="lipid moiety-binding region" description="S-geranylgeranyl cysteine" evidence="5">
    <location>
        <position position="114"/>
    </location>
</feature>
<feature type="sequence conflict" description="In Ref. 4; CAG38489." evidence="4" ref="4">
    <original>I</original>
    <variation>V</variation>
    <location>
        <position position="10"/>
    </location>
</feature>
<feature type="sequence conflict" description="In Ref. 7; AAH44582." evidence="4" ref="7">
    <original>P</original>
    <variation>H</variation>
    <location>
        <position position="28"/>
    </location>
</feature>
<feature type="strand" evidence="6">
    <location>
        <begin position="10"/>
        <end position="15"/>
    </location>
</feature>
<feature type="strand" evidence="6">
    <location>
        <begin position="21"/>
        <end position="26"/>
    </location>
</feature>
<feature type="helix" evidence="6">
    <location>
        <begin position="32"/>
        <end position="40"/>
    </location>
</feature>
<feature type="helix" evidence="6">
    <location>
        <begin position="55"/>
        <end position="57"/>
    </location>
</feature>
<feature type="strand" evidence="6">
    <location>
        <begin position="58"/>
        <end position="66"/>
    </location>
</feature>
<feature type="helix" evidence="6">
    <location>
        <begin position="74"/>
        <end position="76"/>
    </location>
</feature>
<feature type="strand" evidence="6">
    <location>
        <begin position="82"/>
        <end position="90"/>
    </location>
</feature>
<feature type="strand" evidence="6">
    <location>
        <begin position="95"/>
        <end position="99"/>
    </location>
</feature>
<proteinExistence type="evidence at protein level"/>
<keyword id="KW-0002">3D-structure</keyword>
<keyword id="KW-1003">Cell membrane</keyword>
<keyword id="KW-0449">Lipoprotein</keyword>
<keyword id="KW-0472">Membrane</keyword>
<keyword id="KW-0488">Methylation</keyword>
<keyword id="KW-0564">Palmitate</keyword>
<keyword id="KW-0636">Prenylation</keyword>
<keyword id="KW-1267">Proteomics identification</keyword>
<keyword id="KW-1185">Reference proteome</keyword>
<gene>
    <name type="primary">UBL3</name>
    <name type="synonym">PNSC1</name>
</gene>
<name>UBL3_HUMAN</name>
<organism>
    <name type="scientific">Homo sapiens</name>
    <name type="common">Human</name>
    <dbReference type="NCBI Taxonomy" id="9606"/>
    <lineage>
        <taxon>Eukaryota</taxon>
        <taxon>Metazoa</taxon>
        <taxon>Chordata</taxon>
        <taxon>Craniata</taxon>
        <taxon>Vertebrata</taxon>
        <taxon>Euteleostomi</taxon>
        <taxon>Mammalia</taxon>
        <taxon>Eutheria</taxon>
        <taxon>Euarchontoglires</taxon>
        <taxon>Primates</taxon>
        <taxon>Haplorrhini</taxon>
        <taxon>Catarrhini</taxon>
        <taxon>Hominidae</taxon>
        <taxon>Homo</taxon>
    </lineage>
</organism>
<reference key="1">
    <citation type="journal article" date="1999" name="Gene">
        <title>Cloning, mapping and expression of UBL3, a novel ubiquitin-like gene.</title>
        <authorList>
            <person name="Chadwick B.P."/>
            <person name="Kidd T."/>
            <person name="Sgouros J."/>
            <person name="Ish-Horowicz D."/>
            <person name="Frischauf A.-M."/>
        </authorList>
    </citation>
    <scope>NUCLEOTIDE SEQUENCE [MRNA]</scope>
    <scope>TISSUE SPECIFICITY</scope>
</reference>
<reference key="2">
    <citation type="journal article" date="2001" name="Genome Res.">
        <title>Towards a catalog of human genes and proteins: sequencing and analysis of 500 novel complete protein coding human cDNAs.</title>
        <authorList>
            <person name="Wiemann S."/>
            <person name="Weil B."/>
            <person name="Wellenreuther R."/>
            <person name="Gassenhuber J."/>
            <person name="Glassl S."/>
            <person name="Ansorge W."/>
            <person name="Boecher M."/>
            <person name="Bloecker H."/>
            <person name="Bauersachs S."/>
            <person name="Blum H."/>
            <person name="Lauber J."/>
            <person name="Duesterhoeft A."/>
            <person name="Beyer A."/>
            <person name="Koehrer K."/>
            <person name="Strack N."/>
            <person name="Mewes H.-W."/>
            <person name="Ottenwaelder B."/>
            <person name="Obermaier B."/>
            <person name="Tampe J."/>
            <person name="Heubner D."/>
            <person name="Wambutt R."/>
            <person name="Korn B."/>
            <person name="Klein M."/>
            <person name="Poustka A."/>
        </authorList>
    </citation>
    <scope>NUCLEOTIDE SEQUENCE [LARGE SCALE MRNA]</scope>
    <source>
        <tissue>Testis</tissue>
    </source>
</reference>
<reference key="3">
    <citation type="journal article" date="2004" name="Nat. Genet.">
        <title>Complete sequencing and characterization of 21,243 full-length human cDNAs.</title>
        <authorList>
            <person name="Ota T."/>
            <person name="Suzuki Y."/>
            <person name="Nishikawa T."/>
            <person name="Otsuki T."/>
            <person name="Sugiyama T."/>
            <person name="Irie R."/>
            <person name="Wakamatsu A."/>
            <person name="Hayashi K."/>
            <person name="Sato H."/>
            <person name="Nagai K."/>
            <person name="Kimura K."/>
            <person name="Makita H."/>
            <person name="Sekine M."/>
            <person name="Obayashi M."/>
            <person name="Nishi T."/>
            <person name="Shibahara T."/>
            <person name="Tanaka T."/>
            <person name="Ishii S."/>
            <person name="Yamamoto J."/>
            <person name="Saito K."/>
            <person name="Kawai Y."/>
            <person name="Isono Y."/>
            <person name="Nakamura Y."/>
            <person name="Nagahari K."/>
            <person name="Murakami K."/>
            <person name="Yasuda T."/>
            <person name="Iwayanagi T."/>
            <person name="Wagatsuma M."/>
            <person name="Shiratori A."/>
            <person name="Sudo H."/>
            <person name="Hosoiri T."/>
            <person name="Kaku Y."/>
            <person name="Kodaira H."/>
            <person name="Kondo H."/>
            <person name="Sugawara M."/>
            <person name="Takahashi M."/>
            <person name="Kanda K."/>
            <person name="Yokoi T."/>
            <person name="Furuya T."/>
            <person name="Kikkawa E."/>
            <person name="Omura Y."/>
            <person name="Abe K."/>
            <person name="Kamihara K."/>
            <person name="Katsuta N."/>
            <person name="Sato K."/>
            <person name="Tanikawa M."/>
            <person name="Yamazaki M."/>
            <person name="Ninomiya K."/>
            <person name="Ishibashi T."/>
            <person name="Yamashita H."/>
            <person name="Murakawa K."/>
            <person name="Fujimori K."/>
            <person name="Tanai H."/>
            <person name="Kimata M."/>
            <person name="Watanabe M."/>
            <person name="Hiraoka S."/>
            <person name="Chiba Y."/>
            <person name="Ishida S."/>
            <person name="Ono Y."/>
            <person name="Takiguchi S."/>
            <person name="Watanabe S."/>
            <person name="Yosida M."/>
            <person name="Hotuta T."/>
            <person name="Kusano J."/>
            <person name="Kanehori K."/>
            <person name="Takahashi-Fujii A."/>
            <person name="Hara H."/>
            <person name="Tanase T.-O."/>
            <person name="Nomura Y."/>
            <person name="Togiya S."/>
            <person name="Komai F."/>
            <person name="Hara R."/>
            <person name="Takeuchi K."/>
            <person name="Arita M."/>
            <person name="Imose N."/>
            <person name="Musashino K."/>
            <person name="Yuuki H."/>
            <person name="Oshima A."/>
            <person name="Sasaki N."/>
            <person name="Aotsuka S."/>
            <person name="Yoshikawa Y."/>
            <person name="Matsunawa H."/>
            <person name="Ichihara T."/>
            <person name="Shiohata N."/>
            <person name="Sano S."/>
            <person name="Moriya S."/>
            <person name="Momiyama H."/>
            <person name="Satoh N."/>
            <person name="Takami S."/>
            <person name="Terashima Y."/>
            <person name="Suzuki O."/>
            <person name="Nakagawa S."/>
            <person name="Senoh A."/>
            <person name="Mizoguchi H."/>
            <person name="Goto Y."/>
            <person name="Shimizu F."/>
            <person name="Wakebe H."/>
            <person name="Hishigaki H."/>
            <person name="Watanabe T."/>
            <person name="Sugiyama A."/>
            <person name="Takemoto M."/>
            <person name="Kawakami B."/>
            <person name="Yamazaki M."/>
            <person name="Watanabe K."/>
            <person name="Kumagai A."/>
            <person name="Itakura S."/>
            <person name="Fukuzumi Y."/>
            <person name="Fujimori Y."/>
            <person name="Komiyama M."/>
            <person name="Tashiro H."/>
            <person name="Tanigami A."/>
            <person name="Fujiwara T."/>
            <person name="Ono T."/>
            <person name="Yamada K."/>
            <person name="Fujii Y."/>
            <person name="Ozaki K."/>
            <person name="Hirao M."/>
            <person name="Ohmori Y."/>
            <person name="Kawabata A."/>
            <person name="Hikiji T."/>
            <person name="Kobatake N."/>
            <person name="Inagaki H."/>
            <person name="Ikema Y."/>
            <person name="Okamoto S."/>
            <person name="Okitani R."/>
            <person name="Kawakami T."/>
            <person name="Noguchi S."/>
            <person name="Itoh T."/>
            <person name="Shigeta K."/>
            <person name="Senba T."/>
            <person name="Matsumura K."/>
            <person name="Nakajima Y."/>
            <person name="Mizuno T."/>
            <person name="Morinaga M."/>
            <person name="Sasaki M."/>
            <person name="Togashi T."/>
            <person name="Oyama M."/>
            <person name="Hata H."/>
            <person name="Watanabe M."/>
            <person name="Komatsu T."/>
            <person name="Mizushima-Sugano J."/>
            <person name="Satoh T."/>
            <person name="Shirai Y."/>
            <person name="Takahashi Y."/>
            <person name="Nakagawa K."/>
            <person name="Okumura K."/>
            <person name="Nagase T."/>
            <person name="Nomura N."/>
            <person name="Kikuchi H."/>
            <person name="Masuho Y."/>
            <person name="Yamashita R."/>
            <person name="Nakai K."/>
            <person name="Yada T."/>
            <person name="Nakamura Y."/>
            <person name="Ohara O."/>
            <person name="Isogai T."/>
            <person name="Sugano S."/>
        </authorList>
    </citation>
    <scope>NUCLEOTIDE SEQUENCE [LARGE SCALE MRNA]</scope>
    <source>
        <tissue>Corpus callosum</tissue>
        <tissue>Tongue</tissue>
    </source>
</reference>
<reference key="4">
    <citation type="submission" date="2004-06" db="EMBL/GenBank/DDBJ databases">
        <title>Cloning of human full open reading frames in Gateway(TM) system entry vector (pDONR201).</title>
        <authorList>
            <person name="Ebert L."/>
            <person name="Schick M."/>
            <person name="Neubert P."/>
            <person name="Schatten R."/>
            <person name="Henze S."/>
            <person name="Korn B."/>
        </authorList>
    </citation>
    <scope>NUCLEOTIDE SEQUENCE [LARGE SCALE MRNA]</scope>
</reference>
<reference key="5">
    <citation type="journal article" date="2004" name="Nature">
        <title>The DNA sequence and analysis of human chromosome 13.</title>
        <authorList>
            <person name="Dunham A."/>
            <person name="Matthews L.H."/>
            <person name="Burton J."/>
            <person name="Ashurst J.L."/>
            <person name="Howe K.L."/>
            <person name="Ashcroft K.J."/>
            <person name="Beare D.M."/>
            <person name="Burford D.C."/>
            <person name="Hunt S.E."/>
            <person name="Griffiths-Jones S."/>
            <person name="Jones M.C."/>
            <person name="Keenan S.J."/>
            <person name="Oliver K."/>
            <person name="Scott C.E."/>
            <person name="Ainscough R."/>
            <person name="Almeida J.P."/>
            <person name="Ambrose K.D."/>
            <person name="Andrews D.T."/>
            <person name="Ashwell R.I.S."/>
            <person name="Babbage A.K."/>
            <person name="Bagguley C.L."/>
            <person name="Bailey J."/>
            <person name="Bannerjee R."/>
            <person name="Barlow K.F."/>
            <person name="Bates K."/>
            <person name="Beasley H."/>
            <person name="Bird C.P."/>
            <person name="Bray-Allen S."/>
            <person name="Brown A.J."/>
            <person name="Brown J.Y."/>
            <person name="Burrill W."/>
            <person name="Carder C."/>
            <person name="Carter N.P."/>
            <person name="Chapman J.C."/>
            <person name="Clamp M.E."/>
            <person name="Clark S.Y."/>
            <person name="Clarke G."/>
            <person name="Clee C.M."/>
            <person name="Clegg S.C."/>
            <person name="Cobley V."/>
            <person name="Collins J.E."/>
            <person name="Corby N."/>
            <person name="Coville G.J."/>
            <person name="Deloukas P."/>
            <person name="Dhami P."/>
            <person name="Dunham I."/>
            <person name="Dunn M."/>
            <person name="Earthrowl M.E."/>
            <person name="Ellington A.G."/>
            <person name="Faulkner L."/>
            <person name="Frankish A.G."/>
            <person name="Frankland J."/>
            <person name="French L."/>
            <person name="Garner P."/>
            <person name="Garnett J."/>
            <person name="Gilbert J.G.R."/>
            <person name="Gilson C.J."/>
            <person name="Ghori J."/>
            <person name="Grafham D.V."/>
            <person name="Gribble S.M."/>
            <person name="Griffiths C."/>
            <person name="Hall R.E."/>
            <person name="Hammond S."/>
            <person name="Harley J.L."/>
            <person name="Hart E.A."/>
            <person name="Heath P.D."/>
            <person name="Howden P.J."/>
            <person name="Huckle E.J."/>
            <person name="Hunt P.J."/>
            <person name="Hunt A.R."/>
            <person name="Johnson C."/>
            <person name="Johnson D."/>
            <person name="Kay M."/>
            <person name="Kimberley A.M."/>
            <person name="King A."/>
            <person name="Laird G.K."/>
            <person name="Langford C.J."/>
            <person name="Lawlor S."/>
            <person name="Leongamornlert D.A."/>
            <person name="Lloyd D.M."/>
            <person name="Lloyd C."/>
            <person name="Loveland J.E."/>
            <person name="Lovell J."/>
            <person name="Martin S."/>
            <person name="Mashreghi-Mohammadi M."/>
            <person name="McLaren S.J."/>
            <person name="McMurray A."/>
            <person name="Milne S."/>
            <person name="Moore M.J.F."/>
            <person name="Nickerson T."/>
            <person name="Palmer S.A."/>
            <person name="Pearce A.V."/>
            <person name="Peck A.I."/>
            <person name="Pelan S."/>
            <person name="Phillimore B."/>
            <person name="Porter K.M."/>
            <person name="Rice C.M."/>
            <person name="Searle S."/>
            <person name="Sehra H.K."/>
            <person name="Shownkeen R."/>
            <person name="Skuce C.D."/>
            <person name="Smith M."/>
            <person name="Steward C.A."/>
            <person name="Sycamore N."/>
            <person name="Tester J."/>
            <person name="Thomas D.W."/>
            <person name="Tracey A."/>
            <person name="Tromans A."/>
            <person name="Tubby B."/>
            <person name="Wall M."/>
            <person name="Wallis J.M."/>
            <person name="West A.P."/>
            <person name="Whitehead S.L."/>
            <person name="Willey D.L."/>
            <person name="Wilming L."/>
            <person name="Wray P.W."/>
            <person name="Wright M.W."/>
            <person name="Young L."/>
            <person name="Coulson A."/>
            <person name="Durbin R.M."/>
            <person name="Hubbard T."/>
            <person name="Sulston J.E."/>
            <person name="Beck S."/>
            <person name="Bentley D.R."/>
            <person name="Rogers J."/>
            <person name="Ross M.T."/>
        </authorList>
    </citation>
    <scope>NUCLEOTIDE SEQUENCE [LARGE SCALE GENOMIC DNA]</scope>
</reference>
<reference key="6">
    <citation type="submission" date="2005-07" db="EMBL/GenBank/DDBJ databases">
        <authorList>
            <person name="Mural R.J."/>
            <person name="Istrail S."/>
            <person name="Sutton G."/>
            <person name="Florea L."/>
            <person name="Halpern A.L."/>
            <person name="Mobarry C.M."/>
            <person name="Lippert R."/>
            <person name="Walenz B."/>
            <person name="Shatkay H."/>
            <person name="Dew I."/>
            <person name="Miller J.R."/>
            <person name="Flanigan M.J."/>
            <person name="Edwards N.J."/>
            <person name="Bolanos R."/>
            <person name="Fasulo D."/>
            <person name="Halldorsson B.V."/>
            <person name="Hannenhalli S."/>
            <person name="Turner R."/>
            <person name="Yooseph S."/>
            <person name="Lu F."/>
            <person name="Nusskern D.R."/>
            <person name="Shue B.C."/>
            <person name="Zheng X.H."/>
            <person name="Zhong F."/>
            <person name="Delcher A.L."/>
            <person name="Huson D.H."/>
            <person name="Kravitz S.A."/>
            <person name="Mouchard L."/>
            <person name="Reinert K."/>
            <person name="Remington K.A."/>
            <person name="Clark A.G."/>
            <person name="Waterman M.S."/>
            <person name="Eichler E.E."/>
            <person name="Adams M.D."/>
            <person name="Hunkapiller M.W."/>
            <person name="Myers E.W."/>
            <person name="Venter J.C."/>
        </authorList>
    </citation>
    <scope>NUCLEOTIDE SEQUENCE [LARGE SCALE GENOMIC DNA]</scope>
</reference>
<reference key="7">
    <citation type="journal article" date="2004" name="Genome Res.">
        <title>The status, quality, and expansion of the NIH full-length cDNA project: the Mammalian Gene Collection (MGC).</title>
        <authorList>
            <consortium name="The MGC Project Team"/>
        </authorList>
    </citation>
    <scope>NUCLEOTIDE SEQUENCE [LARGE SCALE MRNA]</scope>
    <source>
        <tissue>Brain</tissue>
    </source>
</reference>
<reference key="8">
    <citation type="journal article" date="2006" name="J. Biol. Chem.">
        <title>MUBS: a family of ubiquitin-fold proteins that are plasma membrane-anchored by prenylation.</title>
        <authorList>
            <person name="Downes B.P."/>
            <person name="Saracco S.A."/>
            <person name="Lee S.S."/>
            <person name="Crowell D.N."/>
            <person name="Vierstra R.D."/>
        </authorList>
    </citation>
    <scope>IDENTIFICATION</scope>
    <scope>NOMENCLATURE</scope>
    <scope>PALMITOYLATION AT CYS-113</scope>
    <scope>ISOPRENYLATION AT CYS-114 IN VITRO</scope>
</reference>
<reference key="9">
    <citation type="journal article" date="2007" name="Protein Sci.">
        <title>Solution structure of a membrane-anchored ubiquitin-fold (MUB) protein from Homo sapiens.</title>
        <authorList>
            <person name="de la Cruz N.B."/>
            <person name="Peterson F.C."/>
            <person name="Lytle B.L."/>
            <person name="Volkman B.F."/>
        </authorList>
    </citation>
    <scope>STRUCTURE BY NMR OF 2-117</scope>
</reference>
<accession>O95164</accession>
<accession>B2R4J1</accession>
<accession>Q5RL72</accession>
<accession>Q5VZS0</accession>
<accession>Q6FIG8</accession>
<accession>Q96SG7</accession>
<comment type="interaction">
    <interactant intactId="EBI-12876508">
        <id>O95164</id>
    </interactant>
    <interactant intactId="EBI-739467">
        <id>Q9H8Y8</id>
        <label>GORASP2</label>
    </interactant>
    <organismsDiffer>false</organismsDiffer>
    <experiments>3</experiments>
</comment>
<comment type="interaction">
    <interactant intactId="EBI-12876508">
        <id>O95164</id>
    </interactant>
    <interactant intactId="EBI-12094670">
        <id>Q8WUI4-6</id>
        <label>HDAC7</label>
    </interactant>
    <organismsDiffer>false</organismsDiffer>
    <experiments>3</experiments>
</comment>
<comment type="interaction">
    <interactant intactId="EBI-12876508">
        <id>O95164</id>
    </interactant>
    <interactant intactId="EBI-7133736">
        <id>P07686</id>
        <label>HEXB</label>
    </interactant>
    <organismsDiffer>false</organismsDiffer>
    <experiments>3</experiments>
</comment>
<comment type="interaction">
    <interactant intactId="EBI-12876508">
        <id>O95164</id>
    </interactant>
    <interactant intactId="EBI-748182">
        <id>Q8TC57</id>
        <label>M1AP</label>
    </interactant>
    <organismsDiffer>false</organismsDiffer>
    <experiments>3</experiments>
</comment>
<comment type="interaction">
    <interactant intactId="EBI-12876508">
        <id>O95164</id>
    </interactant>
    <interactant intactId="EBI-12123390">
        <id>Q9NWB1-5</id>
        <label>RBFOX1</label>
    </interactant>
    <organismsDiffer>false</organismsDiffer>
    <experiments>3</experiments>
</comment>
<comment type="interaction">
    <interactant intactId="EBI-12876508">
        <id>O95164</id>
    </interactant>
    <interactant intactId="EBI-711909">
        <id>P02766</id>
        <label>TTR</label>
    </interactant>
    <organismsDiffer>false</organismsDiffer>
    <experiments>3</experiments>
</comment>
<comment type="subcellular location">
    <subcellularLocation>
        <location evidence="1">Cell membrane</location>
        <topology evidence="1">Lipid-anchor</topology>
    </subcellularLocation>
</comment>
<comment type="tissue specificity">
    <text evidence="3">Ubiquitous.</text>
</comment>
<protein>
    <recommendedName>
        <fullName>Ubiquitin-like protein 3</fullName>
    </recommendedName>
    <alternativeName>
        <fullName>Membrane-anchored ubiquitin-fold protein</fullName>
        <shortName>HsMUB</shortName>
        <shortName>MUB</shortName>
    </alternativeName>
    <alternativeName>
        <fullName>Protein HCG-1</fullName>
    </alternativeName>
</protein>